<dbReference type="EC" id="1.-.-.-" evidence="9"/>
<dbReference type="EMBL" id="JQ708194">
    <property type="protein sequence ID" value="AGC83578.1"/>
    <property type="molecule type" value="Genomic_DNA"/>
</dbReference>
<dbReference type="SMR" id="L7WME9"/>
<dbReference type="GlyCosmos" id="L7WME9">
    <property type="glycosylation" value="2 sites, No reported glycans"/>
</dbReference>
<dbReference type="VEuPathDB" id="FungiDB:ASPVEDRAFT_122855"/>
<dbReference type="GO" id="GO:0016020">
    <property type="term" value="C:membrane"/>
    <property type="evidence" value="ECO:0007669"/>
    <property type="project" value="UniProtKB-SubCell"/>
</dbReference>
<dbReference type="GO" id="GO:0020037">
    <property type="term" value="F:heme binding"/>
    <property type="evidence" value="ECO:0007669"/>
    <property type="project" value="InterPro"/>
</dbReference>
<dbReference type="GO" id="GO:0005506">
    <property type="term" value="F:iron ion binding"/>
    <property type="evidence" value="ECO:0007669"/>
    <property type="project" value="InterPro"/>
</dbReference>
<dbReference type="GO" id="GO:0004497">
    <property type="term" value="F:monooxygenase activity"/>
    <property type="evidence" value="ECO:0007669"/>
    <property type="project" value="UniProtKB-KW"/>
</dbReference>
<dbReference type="GO" id="GO:0016705">
    <property type="term" value="F:oxidoreductase activity, acting on paired donors, with incorporation or reduction of molecular oxygen"/>
    <property type="evidence" value="ECO:0007669"/>
    <property type="project" value="InterPro"/>
</dbReference>
<dbReference type="GO" id="GO:0009820">
    <property type="term" value="P:alkaloid metabolic process"/>
    <property type="evidence" value="ECO:0007669"/>
    <property type="project" value="UniProtKB-KW"/>
</dbReference>
<dbReference type="GO" id="GO:0044550">
    <property type="term" value="P:secondary metabolite biosynthetic process"/>
    <property type="evidence" value="ECO:0007669"/>
    <property type="project" value="UniProtKB-ARBA"/>
</dbReference>
<dbReference type="CDD" id="cd11061">
    <property type="entry name" value="CYP67-like"/>
    <property type="match status" value="1"/>
</dbReference>
<dbReference type="FunFam" id="1.10.630.10:FF:000063">
    <property type="entry name" value="Cytochrome P450 monooxygenase"/>
    <property type="match status" value="1"/>
</dbReference>
<dbReference type="Gene3D" id="1.10.630.10">
    <property type="entry name" value="Cytochrome P450"/>
    <property type="match status" value="1"/>
</dbReference>
<dbReference type="InterPro" id="IPR001128">
    <property type="entry name" value="Cyt_P450"/>
</dbReference>
<dbReference type="InterPro" id="IPR002401">
    <property type="entry name" value="Cyt_P450_E_grp-I"/>
</dbReference>
<dbReference type="InterPro" id="IPR036396">
    <property type="entry name" value="Cyt_P450_sf"/>
</dbReference>
<dbReference type="InterPro" id="IPR050121">
    <property type="entry name" value="Cytochrome_P450_monoxygenase"/>
</dbReference>
<dbReference type="PANTHER" id="PTHR24305">
    <property type="entry name" value="CYTOCHROME P450"/>
    <property type="match status" value="1"/>
</dbReference>
<dbReference type="PANTHER" id="PTHR24305:SF112">
    <property type="entry name" value="L-ORNITHINE-N5-MONOOXYGENASE (EUROFUNG)"/>
    <property type="match status" value="1"/>
</dbReference>
<dbReference type="Pfam" id="PF00067">
    <property type="entry name" value="p450"/>
    <property type="match status" value="1"/>
</dbReference>
<dbReference type="PRINTS" id="PR00463">
    <property type="entry name" value="EP450I"/>
</dbReference>
<dbReference type="PRINTS" id="PR00385">
    <property type="entry name" value="P450"/>
</dbReference>
<dbReference type="SUPFAM" id="SSF48264">
    <property type="entry name" value="Cytochrome P450"/>
    <property type="match status" value="1"/>
</dbReference>
<organism>
    <name type="scientific">Aspergillus versicolor</name>
    <dbReference type="NCBI Taxonomy" id="46472"/>
    <lineage>
        <taxon>Eukaryota</taxon>
        <taxon>Fungi</taxon>
        <taxon>Dikarya</taxon>
        <taxon>Ascomycota</taxon>
        <taxon>Pezizomycotina</taxon>
        <taxon>Eurotiomycetes</taxon>
        <taxon>Eurotiomycetidae</taxon>
        <taxon>Eurotiales</taxon>
        <taxon>Aspergillaceae</taxon>
        <taxon>Aspergillus</taxon>
        <taxon>Aspergillus subgen. Nidulantes</taxon>
    </lineage>
</organism>
<feature type="signal peptide" evidence="2">
    <location>
        <begin position="1"/>
        <end position="22"/>
    </location>
</feature>
<feature type="chain" id="PRO_0000448805" description="Cytochrome P450 monooxygenase notG'">
    <location>
        <begin position="23"/>
        <end position="544"/>
    </location>
</feature>
<feature type="transmembrane region" description="Helical" evidence="2">
    <location>
        <begin position="42"/>
        <end position="62"/>
    </location>
</feature>
<feature type="transmembrane region" description="Helical" evidence="2">
    <location>
        <begin position="66"/>
        <end position="86"/>
    </location>
</feature>
<feature type="binding site" description="axial binding residue" evidence="1">
    <location>
        <position position="487"/>
    </location>
    <ligand>
        <name>heme</name>
        <dbReference type="ChEBI" id="CHEBI:30413"/>
    </ligand>
    <ligandPart>
        <name>Fe</name>
        <dbReference type="ChEBI" id="CHEBI:18248"/>
    </ligandPart>
</feature>
<feature type="glycosylation site" description="N-linked (GlcNAc...) asparagine" evidence="3">
    <location>
        <position position="226"/>
    </location>
</feature>
<feature type="glycosylation site" description="N-linked (GlcNAc...) asparagine" evidence="3">
    <location>
        <position position="404"/>
    </location>
</feature>
<protein>
    <recommendedName>
        <fullName evidence="7">Cytochrome P450 monooxygenase notG'</fullName>
        <ecNumber evidence="9">1.-.-.-</ecNumber>
    </recommendedName>
    <alternativeName>
        <fullName evidence="7">Notoamide biosynthesis cluster protein G'</fullName>
    </alternativeName>
</protein>
<name>NOTG_ASPVE</name>
<proteinExistence type="evidence at protein level"/>
<sequence>MELPFSAMSLLYLLVGIAGVISHQCYFRRGEHHLYPFAYLRWYTLIITAPTVVVSIVWGLPLYDAAKATGGWALTYFAGLYTSLLLYRVQFHPLHGFPGPYGARISGLWLSMGLRDRPAFQKLQELHNQYGPIVRVGPSELSIAYPEAVGIVYGHQSRCYKSTFYDNGHPMKSLHSYRDRAAHDQRRRTWSTGFGDRALRGYETRVHEYRQKLFTRLNDAVGLTVNISDWFNFYSYDVMGDLAFGRSFNMLDTHSNHWAIQVLLDGIVLYKYFVPSWLFRCFVTLPSLSKNWHRFVEFTTQKLVHRMNDKLEIPDICASLLAPLNGRSPTPDEFNLLMGDAMLVVTAGSDTTATALTSVVYELARHPEDVERLRAELLPIDADANGEYRHEQISNLPHLNGFINETLRLHPPVPSVIPRITPAEGVHVKGTHIPGGMAVFCPQWVIGRSDAAFIAPLSFNPERWYKHPDLIKHRSAYAPFLTGPYSCIGKPLALMNIRTTIARLIMTFEIRFPAGEDGSHLMENVEDHFSMGIERMPVVLTRRG</sequence>
<comment type="function">
    <text evidence="5 6 9">Cytochrome P450 monooxygenase; part of the gene cluster that mediates the biosynthesis of notoamide, a fungal indole alkaloid that belongs to a family of natural products containing a characteristic bicyclo[2.2.2]diazaoctane core (PubMed:23213353). The first step of notoamide biosynthesis involves coupling of L-proline and L-tryptophan by the bimodular NRPS notE', to produce cyclo-L-tryptophan-L-proline called brevianamide F (Probable). The reverse prenyltransferase notF' then acts as a deoxybrevianamide E synthase and converts brevianamide F to deoxybrevianamide E via reverse prenylation at C-2 of the indole ring leading to the bicyclo[2.2.2]diazaoctane core (Probable) (PubMed:22660767). Deoxybrevianamide E is further hydroxylated at C-6 of the indole ring, likely catalyzed by the cytochrome P450 monooxygenase notG', to yield 6-hydroxy-deoxybrevianamide E (Probable). 6-hydroxy-deoxybrevianamide E is a specific substrate of the prenyltransferase notC' for normal prenylation at C-7 to produce 6-hydroxy-7-prenyl-deoxybrevianamide, also called notoamide S (Probable). As the proposed pivotal branching point in notoamide biosynthesis, notoamide S can be diverted to notoamide E through an oxidative pyran ring closure putatively catalyzed by either notH' cytochrome P450 monooxygenase or the notD' FAD-linked oxidoreductase (Probable). This step would be followed by an indole 2,3-epoxidation-initiated pinacol-like rearrangement catalyzed by the notB' FAD-dependent monooxygenase leading to the formation of notoamide C and notoamide D (Probable). On the other hand notoamide S is converted to notoamide T by notH' (or notD'), a bifunctional oxidase that also functions as the intramolecular Diels-Alderase responsible for generation of (-)-notoamide T (Probable). To generate antipodal (+)-notoaminide T, notH (or notD) in Aspergillus strain MF297-2 is expected to catalyze a Diels-Alder reaction leading to the opposite stereochemistry (Probable). The remaining oxidoreductase notD' (or notH') likely catalyzes the oxidative pyran ring formation to yield (-)-stephacidin A (Probable). The FAD-dependent monooxygenase notI' is highly similar to notB' and is predicted to catalyze a similar conversion from (-)-stephacidin A to (+)-notoamide B via the 2,3-epoxidation of (-)-stephacidin A followed by a pinacol-type rearrangement (Probable). Finally, it remains unclear which enzyme could be responsible for the final hydroxylation steps leading to notoamide A and sclerotiamide (Probable).</text>
</comment>
<comment type="cofactor">
    <cofactor evidence="1">
        <name>heme</name>
        <dbReference type="ChEBI" id="CHEBI:30413"/>
    </cofactor>
</comment>
<comment type="pathway">
    <text evidence="9">Alkaloid biosynthesis.</text>
</comment>
<comment type="subcellular location">
    <subcellularLocation>
        <location evidence="2">Membrane</location>
        <topology evidence="2">Multi-pass membrane protein</topology>
    </subcellularLocation>
</comment>
<comment type="biotechnology">
    <text evidence="4">Notoamides have been shown to exhibit antitumoral activities (PubMed:17304611). Notoamides A-C show moderate cytotoxicity against HeLa and L1210 cells with IC(50) values in the range of 22-52 mg/ml, but the IC(50) value of notoamide D is greater than 100 mg/ml (PubMed:17304611). Moreover, notoamide C induces G2/M-cell cycle arrest at a concentration of 6.3 mg/ml (PubMed:17304611).</text>
</comment>
<comment type="similarity">
    <text evidence="8">Belongs to the cytochrome P450 family.</text>
</comment>
<gene>
    <name evidence="7" type="primary">notG'</name>
</gene>
<accession>L7WME9</accession>
<keyword id="KW-0017">Alkaloid metabolism</keyword>
<keyword id="KW-0325">Glycoprotein</keyword>
<keyword id="KW-0349">Heme</keyword>
<keyword id="KW-0408">Iron</keyword>
<keyword id="KW-0472">Membrane</keyword>
<keyword id="KW-0479">Metal-binding</keyword>
<keyword id="KW-0503">Monooxygenase</keyword>
<keyword id="KW-0560">Oxidoreductase</keyword>
<keyword id="KW-0732">Signal</keyword>
<keyword id="KW-0812">Transmembrane</keyword>
<keyword id="KW-1133">Transmembrane helix</keyword>
<evidence type="ECO:0000250" key="1">
    <source>
        <dbReference type="UniProtKB" id="P04798"/>
    </source>
</evidence>
<evidence type="ECO:0000255" key="2"/>
<evidence type="ECO:0000255" key="3">
    <source>
        <dbReference type="PROSITE-ProRule" id="PRU00498"/>
    </source>
</evidence>
<evidence type="ECO:0000269" key="4">
    <source>
    </source>
</evidence>
<evidence type="ECO:0000269" key="5">
    <source>
    </source>
</evidence>
<evidence type="ECO:0000269" key="6">
    <source>
    </source>
</evidence>
<evidence type="ECO:0000303" key="7">
    <source>
    </source>
</evidence>
<evidence type="ECO:0000305" key="8"/>
<evidence type="ECO:0000305" key="9">
    <source>
    </source>
</evidence>
<reference key="1">
    <citation type="journal article" date="2012" name="Med. Chem. Commun.">
        <title>Comparative analysis of the biosynthetic systems for fungal bicyclo[2.2.2]diazaoctane indole alkaloids: the (+)/(-)-notoamide, paraherquamide and malbrancheamide pathways.</title>
        <authorList>
            <person name="Li S."/>
            <person name="Anand K."/>
            <person name="Tran H."/>
            <person name="Yu F."/>
            <person name="Finefield J.M."/>
            <person name="Sunderhaus J.D."/>
            <person name="McAfoos T.J."/>
            <person name="Tsukamoto S."/>
            <person name="Williams R.M."/>
            <person name="Sherman D.H."/>
        </authorList>
    </citation>
    <scope>NUCLEOTIDE SEQUENCE [GENOMIC DNA]</scope>
    <scope>FUNCTION</scope>
    <scope>PATHWAY</scope>
    <source>
        <strain>NRRL 35600</strain>
    </source>
</reference>
<reference key="2">
    <citation type="journal article" date="2007" name="Angew. Chem. Int. Ed.">
        <title>Notoamides A-D: prenylated indole alkaloids isolated from a marine-derived fungus, Aspergillus sp.</title>
        <authorList>
            <person name="Kato H."/>
            <person name="Yoshida T."/>
            <person name="Tokue T."/>
            <person name="Nojiri Y."/>
            <person name="Hirota H."/>
            <person name="Ohta T."/>
            <person name="Williams R.M."/>
            <person name="Tsukamoto S."/>
        </authorList>
    </citation>
    <scope>BIOTECHNOLOGY</scope>
</reference>
<reference key="3">
    <citation type="journal article" date="2013" name="Appl. Microbiol. Biotechnol.">
        <title>Identification of a brevianamide F reverse prenyltransferase BrePT from Aspergillus versicolor with a broad substrate specificity towards tryptophan-containing cyclic dipeptides.</title>
        <authorList>
            <person name="Yin S."/>
            <person name="Yu X."/>
            <person name="Wang Q."/>
            <person name="Liu X.Q."/>
            <person name="Li S.M."/>
        </authorList>
    </citation>
    <scope>FUNCTION</scope>
</reference>